<reference key="1">
    <citation type="journal article" date="2014" name="Stand. Genomic Sci.">
        <title>Complete genome sequence of Burkholderia phymatum STM815(T), a broad host range and efficient nitrogen-fixing symbiont of Mimosa species.</title>
        <authorList>
            <person name="Moulin L."/>
            <person name="Klonowska A."/>
            <person name="Caroline B."/>
            <person name="Booth K."/>
            <person name="Vriezen J.A."/>
            <person name="Melkonian R."/>
            <person name="James E.K."/>
            <person name="Young J.P."/>
            <person name="Bena G."/>
            <person name="Hauser L."/>
            <person name="Land M."/>
            <person name="Kyrpides N."/>
            <person name="Bruce D."/>
            <person name="Chain P."/>
            <person name="Copeland A."/>
            <person name="Pitluck S."/>
            <person name="Woyke T."/>
            <person name="Lizotte-Waniewski M."/>
            <person name="Bristow J."/>
            <person name="Riley M."/>
        </authorList>
    </citation>
    <scope>NUCLEOTIDE SEQUENCE [LARGE SCALE GENOMIC DNA]</scope>
    <source>
        <strain>DSM 17167 / CIP 108236 / LMG 21445 / STM815</strain>
    </source>
</reference>
<organism>
    <name type="scientific">Paraburkholderia phymatum (strain DSM 17167 / CIP 108236 / LMG 21445 / STM815)</name>
    <name type="common">Burkholderia phymatum</name>
    <dbReference type="NCBI Taxonomy" id="391038"/>
    <lineage>
        <taxon>Bacteria</taxon>
        <taxon>Pseudomonadati</taxon>
        <taxon>Pseudomonadota</taxon>
        <taxon>Betaproteobacteria</taxon>
        <taxon>Burkholderiales</taxon>
        <taxon>Burkholderiaceae</taxon>
        <taxon>Paraburkholderia</taxon>
    </lineage>
</organism>
<feature type="chain" id="PRO_0000377096" description="tRNA dimethylallyltransferase">
    <location>
        <begin position="1"/>
        <end position="317"/>
    </location>
</feature>
<feature type="region of interest" description="Interaction with substrate tRNA" evidence="1">
    <location>
        <begin position="39"/>
        <end position="42"/>
    </location>
</feature>
<feature type="region of interest" description="Interaction with substrate tRNA" evidence="1">
    <location>
        <begin position="163"/>
        <end position="167"/>
    </location>
</feature>
<feature type="region of interest" description="Interaction with substrate tRNA" evidence="1">
    <location>
        <begin position="248"/>
        <end position="253"/>
    </location>
</feature>
<feature type="binding site" evidence="1">
    <location>
        <begin position="14"/>
        <end position="21"/>
    </location>
    <ligand>
        <name>ATP</name>
        <dbReference type="ChEBI" id="CHEBI:30616"/>
    </ligand>
</feature>
<feature type="binding site" evidence="1">
    <location>
        <begin position="16"/>
        <end position="21"/>
    </location>
    <ligand>
        <name>substrate</name>
    </ligand>
</feature>
<feature type="site" description="Interaction with substrate tRNA" evidence="1">
    <location>
        <position position="105"/>
    </location>
</feature>
<feature type="site" description="Interaction with substrate tRNA" evidence="1">
    <location>
        <position position="127"/>
    </location>
</feature>
<keyword id="KW-0067">ATP-binding</keyword>
<keyword id="KW-0460">Magnesium</keyword>
<keyword id="KW-0547">Nucleotide-binding</keyword>
<keyword id="KW-1185">Reference proteome</keyword>
<keyword id="KW-0808">Transferase</keyword>
<keyword id="KW-0819">tRNA processing</keyword>
<accession>B2JGD1</accession>
<gene>
    <name evidence="1" type="primary">miaA</name>
    <name type="ordered locus">Bphy_2486</name>
</gene>
<protein>
    <recommendedName>
        <fullName evidence="1">tRNA dimethylallyltransferase</fullName>
        <ecNumber evidence="1">2.5.1.75</ecNumber>
    </recommendedName>
    <alternativeName>
        <fullName evidence="1">Dimethylallyl diphosphate:tRNA dimethylallyltransferase</fullName>
        <shortName evidence="1">DMAPP:tRNA dimethylallyltransferase</shortName>
        <shortName evidence="1">DMATase</shortName>
    </alternativeName>
    <alternativeName>
        <fullName evidence="1">Isopentenyl-diphosphate:tRNA isopentenyltransferase</fullName>
        <shortName evidence="1">IPP transferase</shortName>
        <shortName evidence="1">IPPT</shortName>
        <shortName evidence="1">IPTase</shortName>
    </alternativeName>
</protein>
<name>MIAA_PARP8</name>
<dbReference type="EC" id="2.5.1.75" evidence="1"/>
<dbReference type="EMBL" id="CP001043">
    <property type="protein sequence ID" value="ACC71659.1"/>
    <property type="molecule type" value="Genomic_DNA"/>
</dbReference>
<dbReference type="RefSeq" id="WP_012401863.1">
    <property type="nucleotide sequence ID" value="NC_010622.1"/>
</dbReference>
<dbReference type="SMR" id="B2JGD1"/>
<dbReference type="STRING" id="391038.Bphy_2486"/>
<dbReference type="KEGG" id="bph:Bphy_2486"/>
<dbReference type="eggNOG" id="COG0324">
    <property type="taxonomic scope" value="Bacteria"/>
</dbReference>
<dbReference type="HOGENOM" id="CLU_032616_0_0_4"/>
<dbReference type="OrthoDB" id="9776390at2"/>
<dbReference type="Proteomes" id="UP000001192">
    <property type="component" value="Chromosome 1"/>
</dbReference>
<dbReference type="GO" id="GO:0005524">
    <property type="term" value="F:ATP binding"/>
    <property type="evidence" value="ECO:0007669"/>
    <property type="project" value="UniProtKB-UniRule"/>
</dbReference>
<dbReference type="GO" id="GO:0052381">
    <property type="term" value="F:tRNA dimethylallyltransferase activity"/>
    <property type="evidence" value="ECO:0007669"/>
    <property type="project" value="UniProtKB-UniRule"/>
</dbReference>
<dbReference type="GO" id="GO:0006400">
    <property type="term" value="P:tRNA modification"/>
    <property type="evidence" value="ECO:0007669"/>
    <property type="project" value="TreeGrafter"/>
</dbReference>
<dbReference type="FunFam" id="1.10.20.140:FF:000001">
    <property type="entry name" value="tRNA dimethylallyltransferase"/>
    <property type="match status" value="1"/>
</dbReference>
<dbReference type="Gene3D" id="1.10.20.140">
    <property type="match status" value="1"/>
</dbReference>
<dbReference type="Gene3D" id="3.40.50.300">
    <property type="entry name" value="P-loop containing nucleotide triphosphate hydrolases"/>
    <property type="match status" value="1"/>
</dbReference>
<dbReference type="HAMAP" id="MF_00185">
    <property type="entry name" value="IPP_trans"/>
    <property type="match status" value="1"/>
</dbReference>
<dbReference type="InterPro" id="IPR039657">
    <property type="entry name" value="Dimethylallyltransferase"/>
</dbReference>
<dbReference type="InterPro" id="IPR018022">
    <property type="entry name" value="IPT"/>
</dbReference>
<dbReference type="InterPro" id="IPR027417">
    <property type="entry name" value="P-loop_NTPase"/>
</dbReference>
<dbReference type="NCBIfam" id="TIGR00174">
    <property type="entry name" value="miaA"/>
    <property type="match status" value="1"/>
</dbReference>
<dbReference type="PANTHER" id="PTHR11088">
    <property type="entry name" value="TRNA DIMETHYLALLYLTRANSFERASE"/>
    <property type="match status" value="1"/>
</dbReference>
<dbReference type="PANTHER" id="PTHR11088:SF60">
    <property type="entry name" value="TRNA DIMETHYLALLYLTRANSFERASE"/>
    <property type="match status" value="1"/>
</dbReference>
<dbReference type="Pfam" id="PF01715">
    <property type="entry name" value="IPPT"/>
    <property type="match status" value="1"/>
</dbReference>
<dbReference type="SUPFAM" id="SSF52540">
    <property type="entry name" value="P-loop containing nucleoside triphosphate hydrolases"/>
    <property type="match status" value="1"/>
</dbReference>
<sequence>MMQRAPQPIACLLGPTASGKTAAALAFAARAPVEIVSVDSALVYREMDIGTAKPSSEERAVAPHHLIDIVDPVDAYSAADFRADALRLVGEIEARGNVPLLVGGTMLYYKALTQGLNDLPAADPEVRATLDADAAREGWPALHARLAAVDAVTAARLAPNDSQRIQRALEVFMLTGQPMSALLAAPARSDDLAKGYRFVPIALEPSDRSVLHARIAQRFDAMLAKGFIDEVRRLRARGDLHPGLPAMRCVGYRQAWEYLDGETDYDTMRDKGVFATRQLCKRQLTWLRAMPERIVVDCCAGDAAGLALQAIERVIAG</sequence>
<evidence type="ECO:0000255" key="1">
    <source>
        <dbReference type="HAMAP-Rule" id="MF_00185"/>
    </source>
</evidence>
<proteinExistence type="inferred from homology"/>
<comment type="function">
    <text evidence="1">Catalyzes the transfer of a dimethylallyl group onto the adenine at position 37 in tRNAs that read codons beginning with uridine, leading to the formation of N6-(dimethylallyl)adenosine (i(6)A).</text>
</comment>
<comment type="catalytic activity">
    <reaction evidence="1">
        <text>adenosine(37) in tRNA + dimethylallyl diphosphate = N(6)-dimethylallyladenosine(37) in tRNA + diphosphate</text>
        <dbReference type="Rhea" id="RHEA:26482"/>
        <dbReference type="Rhea" id="RHEA-COMP:10162"/>
        <dbReference type="Rhea" id="RHEA-COMP:10375"/>
        <dbReference type="ChEBI" id="CHEBI:33019"/>
        <dbReference type="ChEBI" id="CHEBI:57623"/>
        <dbReference type="ChEBI" id="CHEBI:74411"/>
        <dbReference type="ChEBI" id="CHEBI:74415"/>
        <dbReference type="EC" id="2.5.1.75"/>
    </reaction>
</comment>
<comment type="cofactor">
    <cofactor evidence="1">
        <name>Mg(2+)</name>
        <dbReference type="ChEBI" id="CHEBI:18420"/>
    </cofactor>
</comment>
<comment type="subunit">
    <text evidence="1">Monomer.</text>
</comment>
<comment type="similarity">
    <text evidence="1">Belongs to the IPP transferase family.</text>
</comment>